<gene>
    <name evidence="1" type="primary">mraZ</name>
    <name type="ordered locus">mhp405</name>
</gene>
<evidence type="ECO:0000255" key="1">
    <source>
        <dbReference type="HAMAP-Rule" id="MF_01008"/>
    </source>
</evidence>
<evidence type="ECO:0000255" key="2">
    <source>
        <dbReference type="PROSITE-ProRule" id="PRU01076"/>
    </source>
</evidence>
<comment type="subunit">
    <text evidence="1">Forms oligomers.</text>
</comment>
<comment type="subcellular location">
    <subcellularLocation>
        <location evidence="1">Cytoplasm</location>
        <location evidence="1">Nucleoid</location>
    </subcellularLocation>
</comment>
<comment type="similarity">
    <text evidence="1">Belongs to the MraZ family.</text>
</comment>
<accession>Q600Q0</accession>
<keyword id="KW-0963">Cytoplasm</keyword>
<keyword id="KW-0238">DNA-binding</keyword>
<keyword id="KW-0677">Repeat</keyword>
<keyword id="KW-0804">Transcription</keyword>
<keyword id="KW-0805">Transcription regulation</keyword>
<organism>
    <name type="scientific">Mesomycoplasma hyopneumoniae (strain 232)</name>
    <name type="common">Mycoplasma hyopneumoniae</name>
    <dbReference type="NCBI Taxonomy" id="295358"/>
    <lineage>
        <taxon>Bacteria</taxon>
        <taxon>Bacillati</taxon>
        <taxon>Mycoplasmatota</taxon>
        <taxon>Mycoplasmoidales</taxon>
        <taxon>Metamycoplasmataceae</taxon>
        <taxon>Mesomycoplasma</taxon>
    </lineage>
</organism>
<proteinExistence type="inferred from homology"/>
<sequence length="146" mass="16934">MFGTVFRILDEKNRIVMPPAFRNELEGDFYISANLEKILEIRSQTEFDLLAQKIGKANSLDPKLRDFARYFFGNTVKVSADKQGRFLIPKNLLDLATISKNLYLIGVNNKIEIWPEQRYEQFYAKFSDSEMTADLEKELLKSGVEL</sequence>
<feature type="chain" id="PRO_0000108503" description="Transcriptional regulator MraZ">
    <location>
        <begin position="1"/>
        <end position="146"/>
    </location>
</feature>
<feature type="domain" description="SpoVT-AbrB 1" evidence="2">
    <location>
        <begin position="4"/>
        <end position="46"/>
    </location>
</feature>
<feature type="domain" description="SpoVT-AbrB 2" evidence="2">
    <location>
        <begin position="75"/>
        <end position="118"/>
    </location>
</feature>
<name>MRAZ_MESH2</name>
<protein>
    <recommendedName>
        <fullName>Transcriptional regulator MraZ</fullName>
    </recommendedName>
</protein>
<reference key="1">
    <citation type="journal article" date="2004" name="J. Bacteriol.">
        <title>The genome sequence of Mycoplasma hyopneumoniae strain 232, the agent of swine mycoplasmosis.</title>
        <authorList>
            <person name="Minion F.C."/>
            <person name="Lefkowitz E.J."/>
            <person name="Madsen M.L."/>
            <person name="Cleary B.J."/>
            <person name="Swartzell S.M."/>
            <person name="Mahairas G.G."/>
        </authorList>
    </citation>
    <scope>NUCLEOTIDE SEQUENCE [LARGE SCALE GENOMIC DNA]</scope>
    <source>
        <strain>232</strain>
    </source>
</reference>
<dbReference type="EMBL" id="AE017332">
    <property type="protein sequence ID" value="AAV27559.1"/>
    <property type="molecule type" value="Genomic_DNA"/>
</dbReference>
<dbReference type="RefSeq" id="WP_011206239.1">
    <property type="nucleotide sequence ID" value="NC_006360.1"/>
</dbReference>
<dbReference type="SMR" id="Q600Q0"/>
<dbReference type="GeneID" id="41334705"/>
<dbReference type="KEGG" id="mhy:mhp405"/>
<dbReference type="eggNOG" id="COG2001">
    <property type="taxonomic scope" value="Bacteria"/>
</dbReference>
<dbReference type="HOGENOM" id="CLU_107907_0_2_14"/>
<dbReference type="PhylomeDB" id="Q600Q0"/>
<dbReference type="Proteomes" id="UP000006822">
    <property type="component" value="Chromosome"/>
</dbReference>
<dbReference type="GO" id="GO:0005737">
    <property type="term" value="C:cytoplasm"/>
    <property type="evidence" value="ECO:0007669"/>
    <property type="project" value="UniProtKB-UniRule"/>
</dbReference>
<dbReference type="GO" id="GO:0009295">
    <property type="term" value="C:nucleoid"/>
    <property type="evidence" value="ECO:0007669"/>
    <property type="project" value="UniProtKB-SubCell"/>
</dbReference>
<dbReference type="GO" id="GO:0003700">
    <property type="term" value="F:DNA-binding transcription factor activity"/>
    <property type="evidence" value="ECO:0007669"/>
    <property type="project" value="UniProtKB-UniRule"/>
</dbReference>
<dbReference type="GO" id="GO:0000976">
    <property type="term" value="F:transcription cis-regulatory region binding"/>
    <property type="evidence" value="ECO:0007669"/>
    <property type="project" value="TreeGrafter"/>
</dbReference>
<dbReference type="GO" id="GO:2000143">
    <property type="term" value="P:negative regulation of DNA-templated transcription initiation"/>
    <property type="evidence" value="ECO:0007669"/>
    <property type="project" value="TreeGrafter"/>
</dbReference>
<dbReference type="CDD" id="cd16321">
    <property type="entry name" value="MraZ_C"/>
    <property type="match status" value="1"/>
</dbReference>
<dbReference type="CDD" id="cd16320">
    <property type="entry name" value="MraZ_N"/>
    <property type="match status" value="1"/>
</dbReference>
<dbReference type="Gene3D" id="3.40.1550.20">
    <property type="entry name" value="Transcriptional regulator MraZ domain"/>
    <property type="match status" value="1"/>
</dbReference>
<dbReference type="HAMAP" id="MF_01008">
    <property type="entry name" value="MraZ"/>
    <property type="match status" value="1"/>
</dbReference>
<dbReference type="InterPro" id="IPR003444">
    <property type="entry name" value="MraZ"/>
</dbReference>
<dbReference type="InterPro" id="IPR035644">
    <property type="entry name" value="MraZ_C"/>
</dbReference>
<dbReference type="InterPro" id="IPR020603">
    <property type="entry name" value="MraZ_dom"/>
</dbReference>
<dbReference type="InterPro" id="IPR035642">
    <property type="entry name" value="MraZ_N"/>
</dbReference>
<dbReference type="InterPro" id="IPR038619">
    <property type="entry name" value="MraZ_sf"/>
</dbReference>
<dbReference type="InterPro" id="IPR007159">
    <property type="entry name" value="SpoVT-AbrB_dom"/>
</dbReference>
<dbReference type="InterPro" id="IPR037914">
    <property type="entry name" value="SpoVT-AbrB_sf"/>
</dbReference>
<dbReference type="PANTHER" id="PTHR34701">
    <property type="entry name" value="TRANSCRIPTIONAL REGULATOR MRAZ"/>
    <property type="match status" value="1"/>
</dbReference>
<dbReference type="PANTHER" id="PTHR34701:SF1">
    <property type="entry name" value="TRANSCRIPTIONAL REGULATOR MRAZ"/>
    <property type="match status" value="1"/>
</dbReference>
<dbReference type="Pfam" id="PF02381">
    <property type="entry name" value="MraZ"/>
    <property type="match status" value="2"/>
</dbReference>
<dbReference type="SUPFAM" id="SSF89447">
    <property type="entry name" value="AbrB/MazE/MraZ-like"/>
    <property type="match status" value="1"/>
</dbReference>
<dbReference type="PROSITE" id="PS51740">
    <property type="entry name" value="SPOVT_ABRB"/>
    <property type="match status" value="2"/>
</dbReference>